<protein>
    <recommendedName>
        <fullName>Protein ImuA</fullName>
    </recommendedName>
</protein>
<reference key="1">
    <citation type="journal article" date="2001" name="Proc. Natl. Acad. Sci. U.S.A.">
        <title>Complete genome sequence of Caulobacter crescentus.</title>
        <authorList>
            <person name="Nierman W.C."/>
            <person name="Feldblyum T.V."/>
            <person name="Laub M.T."/>
            <person name="Paulsen I.T."/>
            <person name="Nelson K.E."/>
            <person name="Eisen J.A."/>
            <person name="Heidelberg J.F."/>
            <person name="Alley M.R.K."/>
            <person name="Ohta N."/>
            <person name="Maddock J.R."/>
            <person name="Potocka I."/>
            <person name="Nelson W.C."/>
            <person name="Newton A."/>
            <person name="Stephens C."/>
            <person name="Phadke N.D."/>
            <person name="Ely B."/>
            <person name="DeBoy R.T."/>
            <person name="Dodson R.J."/>
            <person name="Durkin A.S."/>
            <person name="Gwinn M.L."/>
            <person name="Haft D.H."/>
            <person name="Kolonay J.F."/>
            <person name="Smit J."/>
            <person name="Craven M.B."/>
            <person name="Khouri H.M."/>
            <person name="Shetty J."/>
            <person name="Berry K.J."/>
            <person name="Utterback T.R."/>
            <person name="Tran K."/>
            <person name="Wolf A.M."/>
            <person name="Vamathevan J.J."/>
            <person name="Ermolaeva M.D."/>
            <person name="White O."/>
            <person name="Salzberg S.L."/>
            <person name="Venter J.C."/>
            <person name="Shapiro L."/>
            <person name="Fraser C.M."/>
        </authorList>
    </citation>
    <scope>NUCLEOTIDE SEQUENCE [LARGE SCALE GENOMIC DNA]</scope>
    <source>
        <strain>ATCC 19089 / CIP 103742 / CB 15</strain>
    </source>
</reference>
<feature type="chain" id="PRO_0000084189" description="Protein ImuA">
    <location>
        <begin position="1"/>
        <end position="244"/>
    </location>
</feature>
<proteinExistence type="inferred from homology"/>
<organism>
    <name type="scientific">Caulobacter vibrioides (strain ATCC 19089 / CIP 103742 / CB 15)</name>
    <name type="common">Caulobacter crescentus</name>
    <dbReference type="NCBI Taxonomy" id="190650"/>
    <lineage>
        <taxon>Bacteria</taxon>
        <taxon>Pseudomonadati</taxon>
        <taxon>Pseudomonadota</taxon>
        <taxon>Alphaproteobacteria</taxon>
        <taxon>Caulobacterales</taxon>
        <taxon>Caulobacteraceae</taxon>
        <taxon>Caulobacter</taxon>
    </lineage>
</organism>
<dbReference type="EMBL" id="AE005673">
    <property type="protein sequence ID" value="AAK25175.1"/>
    <property type="molecule type" value="Genomic_DNA"/>
</dbReference>
<dbReference type="PIR" id="C87647">
    <property type="entry name" value="C87647"/>
</dbReference>
<dbReference type="RefSeq" id="NP_422007.1">
    <property type="nucleotide sequence ID" value="NC_002696.2"/>
</dbReference>
<dbReference type="SMR" id="Q9A3J1"/>
<dbReference type="STRING" id="190650.CC_3213"/>
<dbReference type="EnsemblBacteria" id="AAK25175">
    <property type="protein sequence ID" value="AAK25175"/>
    <property type="gene ID" value="CC_3213"/>
</dbReference>
<dbReference type="KEGG" id="ccr:CC_3213"/>
<dbReference type="PATRIC" id="fig|190650.5.peg.3219"/>
<dbReference type="eggNOG" id="COG4544">
    <property type="taxonomic scope" value="Bacteria"/>
</dbReference>
<dbReference type="HOGENOM" id="CLU_065750_1_0_5"/>
<dbReference type="BioCyc" id="CAULO:CC3213-MONOMER"/>
<dbReference type="Proteomes" id="UP000001816">
    <property type="component" value="Chromosome"/>
</dbReference>
<dbReference type="GO" id="GO:0006281">
    <property type="term" value="P:DNA repair"/>
    <property type="evidence" value="ECO:0007669"/>
    <property type="project" value="UniProtKB-KW"/>
</dbReference>
<dbReference type="GO" id="GO:0009432">
    <property type="term" value="P:SOS response"/>
    <property type="evidence" value="ECO:0000269"/>
    <property type="project" value="CollecTF"/>
</dbReference>
<dbReference type="Gene3D" id="3.40.50.300">
    <property type="entry name" value="P-loop containing nucleotide triphosphate hydrolases"/>
    <property type="match status" value="1"/>
</dbReference>
<dbReference type="InterPro" id="IPR017026">
    <property type="entry name" value="ImuA"/>
</dbReference>
<dbReference type="InterPro" id="IPR027417">
    <property type="entry name" value="P-loop_NTPase"/>
</dbReference>
<dbReference type="PIRSF" id="PIRSF034285">
    <property type="entry name" value="UCP034285"/>
    <property type="match status" value="1"/>
</dbReference>
<dbReference type="SUPFAM" id="SSF52540">
    <property type="entry name" value="P-loop containing nucleoside triphosphate hydrolases"/>
    <property type="match status" value="1"/>
</dbReference>
<evidence type="ECO:0000250" key="1"/>
<gene>
    <name type="primary">imuA</name>
    <name type="ordered locus">CC_3213</name>
</gene>
<accession>Q9A3J1</accession>
<sequence length="244" mass="25453">MEAGTRTPTPVLSFGEPSIDGCFPGGGLPLGGWHEVTGAGLEDETGAAPAAFVTQLIRGLTDRKGGAVVWVARRADLFAPGLLGLGFPAARLIQVRARDEAETLSLLEDALSTQGVAAAVAEAEAPDLTAGRRLQLACEKRGGFGVVLHRRPYGGRAGGKPRLVSGSASFSRWRIAPAPSGPPPDDIGLGPPRWRVELERCRGGRPGGWILQAQEAGHGPHPFRLVSQLADHDVAAAEAGRRFG</sequence>
<name>IMUA_CAUVC</name>
<comment type="function">
    <text evidence="1">Along with DnaE2 and ImuB is required for the error-prone processing of DNA lesions.</text>
</comment>
<keyword id="KW-0227">DNA damage</keyword>
<keyword id="KW-0234">DNA repair</keyword>
<keyword id="KW-1185">Reference proteome</keyword>